<accession>Q6T6T3</accession>
<evidence type="ECO:0000255" key="1"/>
<evidence type="ECO:0000255" key="2">
    <source>
        <dbReference type="PROSITE-ProRule" id="PRU00068"/>
    </source>
</evidence>
<evidence type="ECO:0000256" key="3">
    <source>
        <dbReference type="SAM" id="MobiDB-lite"/>
    </source>
</evidence>
<evidence type="ECO:0000269" key="4">
    <source>
    </source>
</evidence>
<evidence type="ECO:0000305" key="5"/>
<reference key="1">
    <citation type="journal article" date="2004" name="Gene">
        <title>Bitis gabonica (Gaboon viper) snake venom gland: toward a catalog for the full-length transcripts (cDNA) and proteins.</title>
        <authorList>
            <person name="Francischetti I.M.B."/>
            <person name="My-Pham V."/>
            <person name="Harrison J."/>
            <person name="Garfield M.K."/>
            <person name="Ribeiro J.M.C."/>
        </authorList>
    </citation>
    <scope>NUCLEOTIDE SEQUENCE [LARGE SCALE MRNA]</scope>
    <source>
        <tissue>Venom gland</tissue>
    </source>
</reference>
<reference key="2">
    <citation type="journal article" date="2007" name="J. Proteome Res.">
        <title>Snake venomics of Bitis gabonica gabonica. Protein family composition, subunit organization of venom toxins, and characterization of dimeric disintegrins bitisgabonin-1 and bitisgabonin-2.</title>
        <authorList>
            <person name="Calvete J.J."/>
            <person name="Marcinkiewicz C."/>
            <person name="Sanz L."/>
        </authorList>
    </citation>
    <scope>PROTEIN SEQUENCE OF 48-115</scope>
    <scope>FUNCTION</scope>
    <scope>SUBUNIT</scope>
    <scope>SUBCELLULAR LOCATION</scope>
    <scope>TISSUE SPECIFICITY</scope>
    <scope>IDENTIFICATION BY MASS SPECTROMETRY</scope>
    <source>
        <tissue>Venom</tissue>
    </source>
</reference>
<name>DID1_BITGA</name>
<protein>
    <recommendedName>
        <fullName>Disintegrin gabonin-1</fullName>
    </recommendedName>
    <alternativeName>
        <fullName>Bitisgabonin-1</fullName>
    </alternativeName>
</protein>
<feature type="signal peptide" evidence="1">
    <location>
        <begin position="1"/>
        <end position="20"/>
    </location>
</feature>
<feature type="propeptide" id="PRO_0000321880" evidence="4">
    <location>
        <begin position="21"/>
        <end position="47"/>
    </location>
</feature>
<feature type="chain" id="PRO_0000321881" description="Disintegrin gabonin-1">
    <location>
        <begin position="48"/>
        <end position="128"/>
    </location>
</feature>
<feature type="domain" description="Disintegrin" evidence="2">
    <location>
        <begin position="47"/>
        <end position="112"/>
    </location>
</feature>
<feature type="region of interest" description="Disordered" evidence="3">
    <location>
        <begin position="108"/>
        <end position="128"/>
    </location>
</feature>
<feature type="short sequence motif" description="Cell attachment site">
    <location>
        <begin position="89"/>
        <end position="91"/>
    </location>
</feature>
<feature type="disulfide bond" evidence="2">
    <location>
        <begin position="53"/>
        <end position="76"/>
    </location>
</feature>
<feature type="disulfide bond" description="Interchain (with C-265 in bitisgabonin)" evidence="2">
    <location>
        <position position="54"/>
    </location>
</feature>
<feature type="disulfide bond" description="Interchain (with C-270 in bitisgabonin)" evidence="2">
    <location>
        <position position="59"/>
    </location>
</feature>
<feature type="disulfide bond" evidence="2">
    <location>
        <begin position="67"/>
        <end position="73"/>
    </location>
</feature>
<feature type="disulfide bond" evidence="2">
    <location>
        <begin position="72"/>
        <end position="97"/>
    </location>
</feature>
<feature type="disulfide bond" evidence="2">
    <location>
        <begin position="85"/>
        <end position="104"/>
    </location>
</feature>
<keyword id="KW-1217">Cell adhesion impairing toxin</keyword>
<keyword id="KW-0903">Direct protein sequencing</keyword>
<keyword id="KW-1015">Disulfide bond</keyword>
<keyword id="KW-0964">Secreted</keyword>
<keyword id="KW-0732">Signal</keyword>
<keyword id="KW-0800">Toxin</keyword>
<dbReference type="EMBL" id="AY430404">
    <property type="protein sequence ID" value="AAR24528.1"/>
    <property type="molecule type" value="mRNA"/>
</dbReference>
<dbReference type="GO" id="GO:0005576">
    <property type="term" value="C:extracellular region"/>
    <property type="evidence" value="ECO:0007669"/>
    <property type="project" value="UniProtKB-SubCell"/>
</dbReference>
<dbReference type="GO" id="GO:0090729">
    <property type="term" value="F:toxin activity"/>
    <property type="evidence" value="ECO:0007669"/>
    <property type="project" value="UniProtKB-KW"/>
</dbReference>
<dbReference type="Gene3D" id="4.10.70.10">
    <property type="entry name" value="Disintegrin domain"/>
    <property type="match status" value="1"/>
</dbReference>
<dbReference type="InterPro" id="IPR018358">
    <property type="entry name" value="Disintegrin_CS"/>
</dbReference>
<dbReference type="InterPro" id="IPR001762">
    <property type="entry name" value="Disintegrin_dom"/>
</dbReference>
<dbReference type="InterPro" id="IPR036436">
    <property type="entry name" value="Disintegrin_dom_sf"/>
</dbReference>
<dbReference type="PANTHER" id="PTHR11905">
    <property type="entry name" value="ADAM A DISINTEGRIN AND METALLOPROTEASE DOMAIN"/>
    <property type="match status" value="1"/>
</dbReference>
<dbReference type="PANTHER" id="PTHR11905:SF159">
    <property type="entry name" value="ADAM METALLOPROTEASE"/>
    <property type="match status" value="1"/>
</dbReference>
<dbReference type="Pfam" id="PF00200">
    <property type="entry name" value="Disintegrin"/>
    <property type="match status" value="1"/>
</dbReference>
<dbReference type="PRINTS" id="PR00289">
    <property type="entry name" value="DISINTEGRIN"/>
</dbReference>
<dbReference type="SMART" id="SM00050">
    <property type="entry name" value="DISIN"/>
    <property type="match status" value="1"/>
</dbReference>
<dbReference type="SUPFAM" id="SSF57552">
    <property type="entry name" value="Blood coagulation inhibitor (disintegrin)"/>
    <property type="match status" value="1"/>
</dbReference>
<dbReference type="PROSITE" id="PS00427">
    <property type="entry name" value="DISINTEGRIN_1"/>
    <property type="match status" value="1"/>
</dbReference>
<dbReference type="PROSITE" id="PS50214">
    <property type="entry name" value="DISINTEGRIN_2"/>
    <property type="match status" value="1"/>
</dbReference>
<organism>
    <name type="scientific">Bitis gabonica</name>
    <name type="common">Gaboon adder</name>
    <name type="synonym">Gaboon viper</name>
    <dbReference type="NCBI Taxonomy" id="8694"/>
    <lineage>
        <taxon>Eukaryota</taxon>
        <taxon>Metazoa</taxon>
        <taxon>Chordata</taxon>
        <taxon>Craniata</taxon>
        <taxon>Vertebrata</taxon>
        <taxon>Euteleostomi</taxon>
        <taxon>Lepidosauria</taxon>
        <taxon>Squamata</taxon>
        <taxon>Bifurcata</taxon>
        <taxon>Unidentata</taxon>
        <taxon>Episquamata</taxon>
        <taxon>Toxicofera</taxon>
        <taxon>Serpentes</taxon>
        <taxon>Colubroidea</taxon>
        <taxon>Viperidae</taxon>
        <taxon>Viperinae</taxon>
        <taxon>Bitis</taxon>
    </lineage>
</organism>
<sequence>MIQVLLVIICLAVFPYQGSSIILESGNVNDYEIVYPKKVTVLPTGAMNSAHPCCDPVTCKPKRGEHCISGPCCRNCKFLNAGTICKRGRGDSLHDYCTGVTPDCPRNPNKGESDELEWSAAATGSVLM</sequence>
<comment type="function">
    <text evidence="4">The heterodimer bitisgabonin-1 is a potent inhibitor of the adhesion of the RGD-dependent integrin alpha-5/beta-1 (ITGA5/ITGB1) to immobilized fibronectin.</text>
</comment>
<comment type="subunit">
    <text evidence="4">Heterodimer with bitisgabonin (bitisgabonin-1 is the name of the heterodimer); disulfide-linked.</text>
</comment>
<comment type="subcellular location">
    <subcellularLocation>
        <location evidence="4">Secreted</location>
    </subcellularLocation>
</comment>
<comment type="tissue specificity">
    <text evidence="4">Expressed by the venom gland.</text>
</comment>
<comment type="similarity">
    <text evidence="5">Belongs to the disintegrin family. Dimeric disintegrin subfamily.</text>
</comment>
<proteinExistence type="evidence at protein level"/>